<gene>
    <name evidence="1" type="primary">rplP</name>
    <name type="ordered locus">HPAG1_1257</name>
</gene>
<comment type="function">
    <text evidence="1">Binds 23S rRNA and is also seen to make contacts with the A and possibly P site tRNAs.</text>
</comment>
<comment type="subunit">
    <text evidence="1">Part of the 50S ribosomal subunit.</text>
</comment>
<comment type="similarity">
    <text evidence="1">Belongs to the universal ribosomal protein uL16 family.</text>
</comment>
<accession>Q1CRU8</accession>
<dbReference type="EMBL" id="CP000241">
    <property type="protein sequence ID" value="ABF85324.1"/>
    <property type="molecule type" value="Genomic_DNA"/>
</dbReference>
<dbReference type="RefSeq" id="WP_000928961.1">
    <property type="nucleotide sequence ID" value="NC_008086.1"/>
</dbReference>
<dbReference type="SMR" id="Q1CRU8"/>
<dbReference type="GeneID" id="93237557"/>
<dbReference type="KEGG" id="hpa:HPAG1_1257"/>
<dbReference type="HOGENOM" id="CLU_078858_2_1_7"/>
<dbReference type="GO" id="GO:0022625">
    <property type="term" value="C:cytosolic large ribosomal subunit"/>
    <property type="evidence" value="ECO:0007669"/>
    <property type="project" value="TreeGrafter"/>
</dbReference>
<dbReference type="GO" id="GO:0019843">
    <property type="term" value="F:rRNA binding"/>
    <property type="evidence" value="ECO:0007669"/>
    <property type="project" value="UniProtKB-UniRule"/>
</dbReference>
<dbReference type="GO" id="GO:0003735">
    <property type="term" value="F:structural constituent of ribosome"/>
    <property type="evidence" value="ECO:0007669"/>
    <property type="project" value="InterPro"/>
</dbReference>
<dbReference type="GO" id="GO:0000049">
    <property type="term" value="F:tRNA binding"/>
    <property type="evidence" value="ECO:0007669"/>
    <property type="project" value="UniProtKB-KW"/>
</dbReference>
<dbReference type="GO" id="GO:0006412">
    <property type="term" value="P:translation"/>
    <property type="evidence" value="ECO:0007669"/>
    <property type="project" value="UniProtKB-UniRule"/>
</dbReference>
<dbReference type="CDD" id="cd01433">
    <property type="entry name" value="Ribosomal_L16_L10e"/>
    <property type="match status" value="1"/>
</dbReference>
<dbReference type="FunFam" id="3.90.1170.10:FF:000001">
    <property type="entry name" value="50S ribosomal protein L16"/>
    <property type="match status" value="1"/>
</dbReference>
<dbReference type="Gene3D" id="3.90.1170.10">
    <property type="entry name" value="Ribosomal protein L10e/L16"/>
    <property type="match status" value="1"/>
</dbReference>
<dbReference type="HAMAP" id="MF_01342">
    <property type="entry name" value="Ribosomal_uL16"/>
    <property type="match status" value="1"/>
</dbReference>
<dbReference type="InterPro" id="IPR047873">
    <property type="entry name" value="Ribosomal_uL16"/>
</dbReference>
<dbReference type="InterPro" id="IPR000114">
    <property type="entry name" value="Ribosomal_uL16_bact-type"/>
</dbReference>
<dbReference type="InterPro" id="IPR020798">
    <property type="entry name" value="Ribosomal_uL16_CS"/>
</dbReference>
<dbReference type="InterPro" id="IPR016180">
    <property type="entry name" value="Ribosomal_uL16_dom"/>
</dbReference>
<dbReference type="InterPro" id="IPR036920">
    <property type="entry name" value="Ribosomal_uL16_sf"/>
</dbReference>
<dbReference type="NCBIfam" id="TIGR01164">
    <property type="entry name" value="rplP_bact"/>
    <property type="match status" value="1"/>
</dbReference>
<dbReference type="PANTHER" id="PTHR12220">
    <property type="entry name" value="50S/60S RIBOSOMAL PROTEIN L16"/>
    <property type="match status" value="1"/>
</dbReference>
<dbReference type="PANTHER" id="PTHR12220:SF13">
    <property type="entry name" value="LARGE RIBOSOMAL SUBUNIT PROTEIN UL16M"/>
    <property type="match status" value="1"/>
</dbReference>
<dbReference type="Pfam" id="PF00252">
    <property type="entry name" value="Ribosomal_L16"/>
    <property type="match status" value="1"/>
</dbReference>
<dbReference type="PRINTS" id="PR00060">
    <property type="entry name" value="RIBOSOMALL16"/>
</dbReference>
<dbReference type="SUPFAM" id="SSF54686">
    <property type="entry name" value="Ribosomal protein L16p/L10e"/>
    <property type="match status" value="1"/>
</dbReference>
<dbReference type="PROSITE" id="PS00586">
    <property type="entry name" value="RIBOSOMAL_L16_1"/>
    <property type="match status" value="1"/>
</dbReference>
<dbReference type="PROSITE" id="PS00701">
    <property type="entry name" value="RIBOSOMAL_L16_2"/>
    <property type="match status" value="1"/>
</dbReference>
<protein>
    <recommendedName>
        <fullName evidence="1">Large ribosomal subunit protein uL16</fullName>
    </recommendedName>
    <alternativeName>
        <fullName evidence="3">50S ribosomal protein L16</fullName>
    </alternativeName>
</protein>
<name>RL16_HELPH</name>
<evidence type="ECO:0000255" key="1">
    <source>
        <dbReference type="HAMAP-Rule" id="MF_01342"/>
    </source>
</evidence>
<evidence type="ECO:0000256" key="2">
    <source>
        <dbReference type="SAM" id="MobiDB-lite"/>
    </source>
</evidence>
<evidence type="ECO:0000305" key="3"/>
<keyword id="KW-0687">Ribonucleoprotein</keyword>
<keyword id="KW-0689">Ribosomal protein</keyword>
<keyword id="KW-0694">RNA-binding</keyword>
<keyword id="KW-0699">rRNA-binding</keyword>
<keyword id="KW-0820">tRNA-binding</keyword>
<reference key="1">
    <citation type="journal article" date="2006" name="Proc. Natl. Acad. Sci. U.S.A.">
        <title>The complete genome sequence of a chronic atrophic gastritis Helicobacter pylori strain: evolution during disease progression.</title>
        <authorList>
            <person name="Oh J.D."/>
            <person name="Kling-Baeckhed H."/>
            <person name="Giannakis M."/>
            <person name="Xu J."/>
            <person name="Fulton R.S."/>
            <person name="Fulton L.A."/>
            <person name="Cordum H.S."/>
            <person name="Wang C."/>
            <person name="Elliott G."/>
            <person name="Edwards J."/>
            <person name="Mardis E.R."/>
            <person name="Engstrand L.G."/>
            <person name="Gordon J.I."/>
        </authorList>
    </citation>
    <scope>NUCLEOTIDE SEQUENCE [LARGE SCALE GENOMIC DNA]</scope>
    <source>
        <strain>HPAG1</strain>
    </source>
</reference>
<organism>
    <name type="scientific">Helicobacter pylori (strain HPAG1)</name>
    <dbReference type="NCBI Taxonomy" id="357544"/>
    <lineage>
        <taxon>Bacteria</taxon>
        <taxon>Pseudomonadati</taxon>
        <taxon>Campylobacterota</taxon>
        <taxon>Epsilonproteobacteria</taxon>
        <taxon>Campylobacterales</taxon>
        <taxon>Helicobacteraceae</taxon>
        <taxon>Helicobacter</taxon>
    </lineage>
</organism>
<proteinExistence type="inferred from homology"/>
<feature type="chain" id="PRO_0000251639" description="Large ribosomal subunit protein uL16">
    <location>
        <begin position="1"/>
        <end position="141"/>
    </location>
</feature>
<feature type="region of interest" description="Disordered" evidence="2">
    <location>
        <begin position="1"/>
        <end position="23"/>
    </location>
</feature>
<sequence length="141" mass="16046">MLMPKRTKYRKQMKGRNRGKAHRGNSIAFGDIAIKAIEHGRIDSRQIESARVAMTRHIKRAGKVWIRVFPDKPLTAKPLETRMGKGKGSVEKWVMNIKPGRIVYEMLGIEEGLAREALALAQSKLPFKTKIVTCESENEIY</sequence>